<gene>
    <name type="primary">FMO3</name>
</gene>
<comment type="function">
    <text evidence="2">Essential hepatic enzyme that catalyzes the oxygenation of a wide variety of nitrogen- and sulfur-containing compounds including drugs as well as dietary compounds. Plays an important role in the metabolism of trimethylamine (TMA), via the production of trimethylamine N-oxide (TMAO) metabolite. TMA is generated by the action of gut microbiota using dietary precursors such as choline, choline containing compounds, betaine or L-carnitine. By regulating TMAO concentration, FMO3 directly impacts both platelet responsiveness and rate of thrombus formation.</text>
</comment>
<comment type="catalytic activity">
    <reaction evidence="2">
        <text>trimethylamine + NADPH + O2 = trimethylamine N-oxide + NADP(+) + H2O</text>
        <dbReference type="Rhea" id="RHEA:31979"/>
        <dbReference type="ChEBI" id="CHEBI:15377"/>
        <dbReference type="ChEBI" id="CHEBI:15379"/>
        <dbReference type="ChEBI" id="CHEBI:15724"/>
        <dbReference type="ChEBI" id="CHEBI:57783"/>
        <dbReference type="ChEBI" id="CHEBI:58349"/>
        <dbReference type="ChEBI" id="CHEBI:58389"/>
        <dbReference type="EC" id="1.14.13.148"/>
    </reaction>
    <physiologicalReaction direction="left-to-right" evidence="2">
        <dbReference type="Rhea" id="RHEA:31980"/>
    </physiologicalReaction>
</comment>
<comment type="catalytic activity">
    <reaction evidence="2">
        <text>N,N-dimethylaniline + NADPH + O2 + H(+) = N,N-dimethylaniline N-oxide + NADP(+) + H2O</text>
        <dbReference type="Rhea" id="RHEA:24468"/>
        <dbReference type="ChEBI" id="CHEBI:15377"/>
        <dbReference type="ChEBI" id="CHEBI:15378"/>
        <dbReference type="ChEBI" id="CHEBI:15379"/>
        <dbReference type="ChEBI" id="CHEBI:16269"/>
        <dbReference type="ChEBI" id="CHEBI:17735"/>
        <dbReference type="ChEBI" id="CHEBI:57783"/>
        <dbReference type="ChEBI" id="CHEBI:58349"/>
        <dbReference type="EC" id="1.14.13.8"/>
    </reaction>
    <physiologicalReaction direction="left-to-right" evidence="2">
        <dbReference type="Rhea" id="RHEA:24469"/>
    </physiologicalReaction>
</comment>
<comment type="catalytic activity">
    <reaction evidence="2">
        <text>hypotaurine + NADPH + O2 + H(+) = taurine + NADP(+) + H2O</text>
        <dbReference type="Rhea" id="RHEA:69819"/>
        <dbReference type="ChEBI" id="CHEBI:15377"/>
        <dbReference type="ChEBI" id="CHEBI:15378"/>
        <dbReference type="ChEBI" id="CHEBI:15379"/>
        <dbReference type="ChEBI" id="CHEBI:57783"/>
        <dbReference type="ChEBI" id="CHEBI:57853"/>
        <dbReference type="ChEBI" id="CHEBI:58349"/>
        <dbReference type="ChEBI" id="CHEBI:507393"/>
        <dbReference type="EC" id="1.14.13.8"/>
    </reaction>
    <physiologicalReaction direction="left-to-right" evidence="2">
        <dbReference type="Rhea" id="RHEA:69820"/>
    </physiologicalReaction>
</comment>
<comment type="catalytic activity">
    <reaction evidence="2">
        <text>(S)-nicotine + NADPH + O2 = trans-(S)-nicotine N(1')-oxide + NADP(+) + H2O</text>
        <dbReference type="Rhea" id="RHEA:58720"/>
        <dbReference type="ChEBI" id="CHEBI:15377"/>
        <dbReference type="ChEBI" id="CHEBI:15379"/>
        <dbReference type="ChEBI" id="CHEBI:57783"/>
        <dbReference type="ChEBI" id="CHEBI:58349"/>
        <dbReference type="ChEBI" id="CHEBI:59806"/>
        <dbReference type="ChEBI" id="CHEBI:142660"/>
    </reaction>
    <physiologicalReaction direction="left-to-right" evidence="2">
        <dbReference type="Rhea" id="RHEA:58721"/>
    </physiologicalReaction>
</comment>
<comment type="catalytic activity">
    <reaction evidence="2">
        <text>albendazole + NADPH + O2 + H(+) = albendazole S-oxide + NADP(+) + H2O</text>
        <dbReference type="Rhea" id="RHEA:10796"/>
        <dbReference type="ChEBI" id="CHEBI:15377"/>
        <dbReference type="ChEBI" id="CHEBI:15378"/>
        <dbReference type="ChEBI" id="CHEBI:15379"/>
        <dbReference type="ChEBI" id="CHEBI:16664"/>
        <dbReference type="ChEBI" id="CHEBI:16959"/>
        <dbReference type="ChEBI" id="CHEBI:57783"/>
        <dbReference type="ChEBI" id="CHEBI:58349"/>
        <dbReference type="EC" id="1.14.13.32"/>
    </reaction>
    <physiologicalReaction direction="left-to-right" evidence="2">
        <dbReference type="Rhea" id="RHEA:10797"/>
    </physiologicalReaction>
</comment>
<comment type="cofactor">
    <cofactor evidence="1">
        <name>FAD</name>
        <dbReference type="ChEBI" id="CHEBI:57692"/>
    </cofactor>
</comment>
<comment type="subcellular location">
    <subcellularLocation>
        <location evidence="3">Microsome membrane</location>
        <topology evidence="6">Single-pass membrane protein</topology>
    </subcellularLocation>
    <subcellularLocation>
        <location evidence="3">Endoplasmic reticulum membrane</location>
        <topology evidence="6">Single-pass membrane protein</topology>
    </subcellularLocation>
</comment>
<comment type="tissue specificity">
    <text>Liver.</text>
</comment>
<comment type="similarity">
    <text evidence="7">Belongs to the FMO family.</text>
</comment>
<name>FMO3_MACMU</name>
<keyword id="KW-0256">Endoplasmic reticulum</keyword>
<keyword id="KW-0274">FAD</keyword>
<keyword id="KW-0285">Flavoprotein</keyword>
<keyword id="KW-0472">Membrane</keyword>
<keyword id="KW-0492">Microsome</keyword>
<keyword id="KW-0503">Monooxygenase</keyword>
<keyword id="KW-0521">NADP</keyword>
<keyword id="KW-0560">Oxidoreductase</keyword>
<keyword id="KW-0597">Phosphoprotein</keyword>
<keyword id="KW-1185">Reference proteome</keyword>
<keyword id="KW-0812">Transmembrane</keyword>
<keyword id="KW-1133">Transmembrane helix</keyword>
<sequence length="532" mass="60152">MGKKVAIIGAGVSGLASIRSCLEEGLEPTCFEKSNDIGGLWKFSDHAEEGRASIYKSVFTNSSKEMMCFPDFPYPDDFPNFMHNSKIQEYLTAFAKEKSLLKYIQFKTFVSSVNKRPDFATTGQWDVTTERDGKRESAVFDAVMVCSGHHVYPNLPKESFPGLNHFKGKCFHSRDYKEPGVFKGKRVLVVGLGNSGCDIATELSHTAEQVVISSRSGSWVMSRVWDNGYPWDMVLITRFGTFLKNNLPTAISDWLYMKQMNARFKHENYGLMPLNGVLRKEPVFNDELPACILCGIVSVKPNVKKFTETSAIFEDGTTFEGIDCVIFATGYSYTYTFLDESIIKNRNNEIILFKGVFPPLLEKSTIAVIGFVQSLGAAIPTVDLQSRWAARVIKGTCTLPSMEDMMNDINEKMERKHKWYGKSETLQTDYIVYMDELSSFIGVKPNIPWLFLTDPKLAMEVYFGPCSPYQFRLVGPGKWPGARNAILTQWDRSLKPLQTRVVGRLQKPCFFFHWLKPFAIPILLIAVFLGLT</sequence>
<evidence type="ECO:0000250" key="1"/>
<evidence type="ECO:0000250" key="2">
    <source>
        <dbReference type="UniProtKB" id="P31513"/>
    </source>
</evidence>
<evidence type="ECO:0000250" key="3">
    <source>
        <dbReference type="UniProtKB" id="P32417"/>
    </source>
</evidence>
<evidence type="ECO:0000250" key="4">
    <source>
        <dbReference type="UniProtKB" id="P97501"/>
    </source>
</evidence>
<evidence type="ECO:0000250" key="5">
    <source>
        <dbReference type="UniProtKB" id="Q9HFE4"/>
    </source>
</evidence>
<evidence type="ECO:0000255" key="6"/>
<evidence type="ECO:0000305" key="7"/>
<dbReference type="EC" id="1.14.13.148" evidence="2"/>
<dbReference type="EC" id="1.14.13.32" evidence="2"/>
<dbReference type="EC" id="1.14.13.8" evidence="2"/>
<dbReference type="EMBL" id="AY063498">
    <property type="protein sequence ID" value="AAL86612.1"/>
    <property type="molecule type" value="mRNA"/>
</dbReference>
<dbReference type="RefSeq" id="NP_001028065.1">
    <property type="nucleotide sequence ID" value="NM_001032893.1"/>
</dbReference>
<dbReference type="SMR" id="Q8SPQ7"/>
<dbReference type="FunCoup" id="Q8SPQ7">
    <property type="interactions" value="94"/>
</dbReference>
<dbReference type="STRING" id="9544.ENSMMUP00000010434"/>
<dbReference type="PaxDb" id="9544-ENSMMUP00000010434"/>
<dbReference type="GeneID" id="574244"/>
<dbReference type="KEGG" id="mcc:574244"/>
<dbReference type="CTD" id="2328"/>
<dbReference type="eggNOG" id="KOG1399">
    <property type="taxonomic scope" value="Eukaryota"/>
</dbReference>
<dbReference type="InParanoid" id="Q8SPQ7"/>
<dbReference type="OrthoDB" id="66881at2759"/>
<dbReference type="Proteomes" id="UP000006718">
    <property type="component" value="Unassembled WGS sequence"/>
</dbReference>
<dbReference type="GO" id="GO:0005789">
    <property type="term" value="C:endoplasmic reticulum membrane"/>
    <property type="evidence" value="ECO:0007669"/>
    <property type="project" value="UniProtKB-SubCell"/>
</dbReference>
<dbReference type="GO" id="GO:0047638">
    <property type="term" value="F:albendazole monooxygenase activity"/>
    <property type="evidence" value="ECO:0007669"/>
    <property type="project" value="RHEA"/>
</dbReference>
<dbReference type="GO" id="GO:0050660">
    <property type="term" value="F:flavin adenine dinucleotide binding"/>
    <property type="evidence" value="ECO:0007669"/>
    <property type="project" value="InterPro"/>
</dbReference>
<dbReference type="GO" id="GO:0047822">
    <property type="term" value="F:hypotaurine monooxygenase activity"/>
    <property type="evidence" value="ECO:0007669"/>
    <property type="project" value="RHEA"/>
</dbReference>
<dbReference type="GO" id="GO:0004499">
    <property type="term" value="F:N,N-dimethylaniline monooxygenase activity"/>
    <property type="evidence" value="ECO:0000318"/>
    <property type="project" value="GO_Central"/>
</dbReference>
<dbReference type="GO" id="GO:0050661">
    <property type="term" value="F:NADP binding"/>
    <property type="evidence" value="ECO:0007669"/>
    <property type="project" value="InterPro"/>
</dbReference>
<dbReference type="GO" id="GO:0034899">
    <property type="term" value="F:trimethylamine monooxygenase activity"/>
    <property type="evidence" value="ECO:0007669"/>
    <property type="project" value="UniProtKB-EC"/>
</dbReference>
<dbReference type="FunFam" id="3.50.50.60:FF:000023">
    <property type="entry name" value="Dimethylaniline monooxygenase [N-oxide-forming]"/>
    <property type="match status" value="1"/>
</dbReference>
<dbReference type="FunFam" id="3.50.50.60:FF:000073">
    <property type="entry name" value="Dimethylaniline monooxygenase [N-oxide-forming]"/>
    <property type="match status" value="1"/>
</dbReference>
<dbReference type="FunFam" id="3.50.50.60:FF:000174">
    <property type="entry name" value="Dimethylaniline monooxygenase [N-oxide-forming]"/>
    <property type="match status" value="1"/>
</dbReference>
<dbReference type="FunFam" id="3.50.50.60:FF:000454">
    <property type="entry name" value="Dimethylaniline monooxygenase [N-oxide-forming]"/>
    <property type="match status" value="1"/>
</dbReference>
<dbReference type="Gene3D" id="3.50.50.60">
    <property type="entry name" value="FAD/NAD(P)-binding domain"/>
    <property type="match status" value="4"/>
</dbReference>
<dbReference type="InterPro" id="IPR036188">
    <property type="entry name" value="FAD/NAD-bd_sf"/>
</dbReference>
<dbReference type="InterPro" id="IPR000960">
    <property type="entry name" value="Flavin_mOase"/>
</dbReference>
<dbReference type="InterPro" id="IPR020946">
    <property type="entry name" value="Flavin_mOase-like"/>
</dbReference>
<dbReference type="InterPro" id="IPR002255">
    <property type="entry name" value="Flavin_mOase_3"/>
</dbReference>
<dbReference type="InterPro" id="IPR050346">
    <property type="entry name" value="FMO-like"/>
</dbReference>
<dbReference type="PANTHER" id="PTHR23023">
    <property type="entry name" value="DIMETHYLANILINE MONOOXYGENASE"/>
    <property type="match status" value="1"/>
</dbReference>
<dbReference type="Pfam" id="PF00743">
    <property type="entry name" value="FMO-like"/>
    <property type="match status" value="1"/>
</dbReference>
<dbReference type="PIRSF" id="PIRSF000332">
    <property type="entry name" value="FMO"/>
    <property type="match status" value="1"/>
</dbReference>
<dbReference type="PRINTS" id="PR00370">
    <property type="entry name" value="FMOXYGENASE"/>
</dbReference>
<dbReference type="PRINTS" id="PR01123">
    <property type="entry name" value="FMOXYGENASE3"/>
</dbReference>
<dbReference type="SUPFAM" id="SSF51905">
    <property type="entry name" value="FAD/NAD(P)-binding domain"/>
    <property type="match status" value="2"/>
</dbReference>
<protein>
    <recommendedName>
        <fullName evidence="2">Flavin-containing monooxygenase 3</fullName>
        <ecNumber evidence="2">1.14.13.148</ecNumber>
        <ecNumber evidence="2">1.14.13.32</ecNumber>
        <ecNumber evidence="2">1.14.13.8</ecNumber>
    </recommendedName>
    <alternativeName>
        <fullName>Dimethylaniline monooxygenase [N-oxide-forming] 3</fullName>
    </alternativeName>
    <alternativeName>
        <fullName>Dimethylaniline oxidase 3</fullName>
    </alternativeName>
    <alternativeName>
        <fullName>Hepatic flavin-containing monooxygenase 3</fullName>
        <shortName>FMO 3</shortName>
    </alternativeName>
    <alternativeName>
        <fullName>Trimethylamine monooxygenase</fullName>
    </alternativeName>
</protein>
<accession>Q8SPQ7</accession>
<reference key="1">
    <citation type="journal article" date="2001" name="Drug Metab. Dispos.">
        <title>Population distribution of human flavin-containing monooxygenase form 3: gene polymorphisms.</title>
        <authorList>
            <person name="Cashman J.R."/>
            <person name="Zhang J."/>
            <person name="Leushner J."/>
            <person name="Braun A."/>
        </authorList>
    </citation>
    <scope>NUCLEOTIDE SEQUENCE [MRNA]</scope>
    <source>
        <tissue>Liver</tissue>
    </source>
</reference>
<organism>
    <name type="scientific">Macaca mulatta</name>
    <name type="common">Rhesus macaque</name>
    <dbReference type="NCBI Taxonomy" id="9544"/>
    <lineage>
        <taxon>Eukaryota</taxon>
        <taxon>Metazoa</taxon>
        <taxon>Chordata</taxon>
        <taxon>Craniata</taxon>
        <taxon>Vertebrata</taxon>
        <taxon>Euteleostomi</taxon>
        <taxon>Mammalia</taxon>
        <taxon>Eutheria</taxon>
        <taxon>Euarchontoglires</taxon>
        <taxon>Primates</taxon>
        <taxon>Haplorrhini</taxon>
        <taxon>Catarrhini</taxon>
        <taxon>Cercopithecidae</taxon>
        <taxon>Cercopithecinae</taxon>
        <taxon>Macaca</taxon>
    </lineage>
</organism>
<proteinExistence type="evidence at transcript level"/>
<feature type="chain" id="PRO_0000147655" description="Flavin-containing monooxygenase 3">
    <location>
        <begin position="1"/>
        <end position="532"/>
    </location>
</feature>
<feature type="transmembrane region" description="Helical" evidence="6">
    <location>
        <begin position="510"/>
        <end position="530"/>
    </location>
</feature>
<feature type="binding site" evidence="5">
    <location>
        <begin position="9"/>
        <end position="13"/>
    </location>
    <ligand>
        <name>FAD</name>
        <dbReference type="ChEBI" id="CHEBI:57692"/>
    </ligand>
</feature>
<feature type="binding site" evidence="5">
    <location>
        <position position="32"/>
    </location>
    <ligand>
        <name>FAD</name>
        <dbReference type="ChEBI" id="CHEBI:57692"/>
    </ligand>
</feature>
<feature type="binding site" evidence="5">
    <location>
        <begin position="40"/>
        <end position="41"/>
    </location>
    <ligand>
        <name>FAD</name>
        <dbReference type="ChEBI" id="CHEBI:57692"/>
    </ligand>
</feature>
<feature type="binding site" evidence="5">
    <location>
        <begin position="60"/>
        <end position="61"/>
    </location>
    <ligand>
        <name>NADP(+)</name>
        <dbReference type="ChEBI" id="CHEBI:58349"/>
    </ligand>
</feature>
<feature type="binding site" evidence="5">
    <location>
        <begin position="61"/>
        <end position="62"/>
    </location>
    <ligand>
        <name>FAD</name>
        <dbReference type="ChEBI" id="CHEBI:57692"/>
    </ligand>
</feature>
<feature type="binding site" evidence="5">
    <location>
        <begin position="195"/>
        <end position="198"/>
    </location>
    <ligand>
        <name>NADP(+)</name>
        <dbReference type="ChEBI" id="CHEBI:58349"/>
    </ligand>
</feature>
<feature type="modified residue" description="Phosphoserine" evidence="4">
    <location>
        <position position="401"/>
    </location>
</feature>